<feature type="chain" id="PRO_0000245873" description="FMN-dependent NADH:quinone oxidoreductase 1">
    <location>
        <begin position="1"/>
        <end position="220"/>
    </location>
</feature>
<feature type="binding site" evidence="1">
    <location>
        <begin position="18"/>
        <end position="20"/>
    </location>
    <ligand>
        <name>FMN</name>
        <dbReference type="ChEBI" id="CHEBI:58210"/>
    </ligand>
</feature>
<feature type="strand" evidence="2">
    <location>
        <begin position="3"/>
        <end position="8"/>
    </location>
</feature>
<feature type="turn" evidence="2">
    <location>
        <begin position="11"/>
        <end position="14"/>
    </location>
</feature>
<feature type="helix" evidence="2">
    <location>
        <begin position="19"/>
        <end position="34"/>
    </location>
</feature>
<feature type="strand" evidence="2">
    <location>
        <begin position="40"/>
        <end position="45"/>
    </location>
</feature>
<feature type="turn" evidence="2">
    <location>
        <begin position="46"/>
        <end position="48"/>
    </location>
</feature>
<feature type="helix" evidence="2">
    <location>
        <begin position="56"/>
        <end position="65"/>
    </location>
</feature>
<feature type="turn" evidence="2">
    <location>
        <begin position="66"/>
        <end position="68"/>
    </location>
</feature>
<feature type="helix" evidence="2">
    <location>
        <begin position="73"/>
        <end position="91"/>
    </location>
</feature>
<feature type="strand" evidence="2">
    <location>
        <begin position="93"/>
        <end position="100"/>
    </location>
</feature>
<feature type="helix" evidence="2">
    <location>
        <begin position="108"/>
        <end position="117"/>
    </location>
</feature>
<feature type="turn" evidence="2">
    <location>
        <begin position="120"/>
        <end position="122"/>
    </location>
</feature>
<feature type="strand" evidence="2">
    <location>
        <begin position="123"/>
        <end position="126"/>
    </location>
</feature>
<feature type="strand" evidence="2">
    <location>
        <begin position="131"/>
        <end position="134"/>
    </location>
</feature>
<feature type="strand" evidence="2">
    <location>
        <begin position="140"/>
        <end position="146"/>
    </location>
</feature>
<feature type="strand" evidence="2">
    <location>
        <begin position="152"/>
        <end position="155"/>
    </location>
</feature>
<feature type="helix" evidence="2">
    <location>
        <begin position="156"/>
        <end position="159"/>
    </location>
</feature>
<feature type="helix" evidence="2">
    <location>
        <begin position="162"/>
        <end position="174"/>
    </location>
</feature>
<feature type="strand" evidence="2">
    <location>
        <begin position="178"/>
        <end position="184"/>
    </location>
</feature>
<feature type="turn" evidence="2">
    <location>
        <begin position="187"/>
        <end position="189"/>
    </location>
</feature>
<feature type="helix" evidence="2">
    <location>
        <begin position="192"/>
        <end position="211"/>
    </location>
</feature>
<reference key="1">
    <citation type="journal article" date="2003" name="Nature">
        <title>The genome sequence of Bacillus anthracis Ames and comparison to closely related bacteria.</title>
        <authorList>
            <person name="Read T.D."/>
            <person name="Peterson S.N."/>
            <person name="Tourasse N.J."/>
            <person name="Baillie L.W."/>
            <person name="Paulsen I.T."/>
            <person name="Nelson K.E."/>
            <person name="Tettelin H."/>
            <person name="Fouts D.E."/>
            <person name="Eisen J.A."/>
            <person name="Gill S.R."/>
            <person name="Holtzapple E.K."/>
            <person name="Okstad O.A."/>
            <person name="Helgason E."/>
            <person name="Rilstone J."/>
            <person name="Wu M."/>
            <person name="Kolonay J.F."/>
            <person name="Beanan M.J."/>
            <person name="Dodson R.J."/>
            <person name="Brinkac L.M."/>
            <person name="Gwinn M.L."/>
            <person name="DeBoy R.T."/>
            <person name="Madpu R."/>
            <person name="Daugherty S.C."/>
            <person name="Durkin A.S."/>
            <person name="Haft D.H."/>
            <person name="Nelson W.C."/>
            <person name="Peterson J.D."/>
            <person name="Pop M."/>
            <person name="Khouri H.M."/>
            <person name="Radune D."/>
            <person name="Benton J.L."/>
            <person name="Mahamoud Y."/>
            <person name="Jiang L."/>
            <person name="Hance I.R."/>
            <person name="Weidman J.F."/>
            <person name="Berry K.J."/>
            <person name="Plaut R.D."/>
            <person name="Wolf A.M."/>
            <person name="Watkins K.L."/>
            <person name="Nierman W.C."/>
            <person name="Hazen A."/>
            <person name="Cline R.T."/>
            <person name="Redmond C."/>
            <person name="Thwaite J.E."/>
            <person name="White O."/>
            <person name="Salzberg S.L."/>
            <person name="Thomason B."/>
            <person name="Friedlander A.M."/>
            <person name="Koehler T.M."/>
            <person name="Hanna P.C."/>
            <person name="Kolstoe A.-B."/>
            <person name="Fraser C.M."/>
        </authorList>
    </citation>
    <scope>NUCLEOTIDE SEQUENCE [LARGE SCALE GENOMIC DNA]</scope>
    <source>
        <strain>Ames / isolate Porton</strain>
    </source>
</reference>
<reference key="2">
    <citation type="submission" date="2004-01" db="EMBL/GenBank/DDBJ databases">
        <title>Complete genome sequence of Bacillus anthracis Sterne.</title>
        <authorList>
            <person name="Brettin T.S."/>
            <person name="Bruce D."/>
            <person name="Challacombe J.F."/>
            <person name="Gilna P."/>
            <person name="Han C."/>
            <person name="Hill K."/>
            <person name="Hitchcock P."/>
            <person name="Jackson P."/>
            <person name="Keim P."/>
            <person name="Longmire J."/>
            <person name="Lucas S."/>
            <person name="Okinaka R."/>
            <person name="Richardson P."/>
            <person name="Rubin E."/>
            <person name="Tice H."/>
        </authorList>
    </citation>
    <scope>NUCLEOTIDE SEQUENCE [LARGE SCALE GENOMIC DNA]</scope>
    <source>
        <strain>Sterne</strain>
    </source>
</reference>
<reference key="3">
    <citation type="journal article" date="2009" name="J. Bacteriol.">
        <title>The complete genome sequence of Bacillus anthracis Ames 'Ancestor'.</title>
        <authorList>
            <person name="Ravel J."/>
            <person name="Jiang L."/>
            <person name="Stanley S.T."/>
            <person name="Wilson M.R."/>
            <person name="Decker R.S."/>
            <person name="Read T.D."/>
            <person name="Worsham P."/>
            <person name="Keim P.S."/>
            <person name="Salzberg S.L."/>
            <person name="Fraser-Liggett C.M."/>
            <person name="Rasko D.A."/>
        </authorList>
    </citation>
    <scope>NUCLEOTIDE SEQUENCE [LARGE SCALE GENOMIC DNA]</scope>
    <source>
        <strain>Ames ancestor</strain>
    </source>
</reference>
<organism>
    <name type="scientific">Bacillus anthracis</name>
    <dbReference type="NCBI Taxonomy" id="1392"/>
    <lineage>
        <taxon>Bacteria</taxon>
        <taxon>Bacillati</taxon>
        <taxon>Bacillota</taxon>
        <taxon>Bacilli</taxon>
        <taxon>Bacillales</taxon>
        <taxon>Bacillaceae</taxon>
        <taxon>Bacillus</taxon>
        <taxon>Bacillus cereus group</taxon>
    </lineage>
</organism>
<gene>
    <name evidence="1" type="primary">azoR1</name>
    <name type="ordered locus">BA_0966</name>
    <name type="ordered locus">GBAA_0966</name>
    <name type="ordered locus">BAS0908</name>
</gene>
<keyword id="KW-0002">3D-structure</keyword>
<keyword id="KW-0285">Flavoprotein</keyword>
<keyword id="KW-0288">FMN</keyword>
<keyword id="KW-0520">NAD</keyword>
<keyword id="KW-0560">Oxidoreductase</keyword>
<keyword id="KW-1185">Reference proteome</keyword>
<comment type="function">
    <text evidence="1">Quinone reductase that provides resistance to thiol-specific stress caused by electrophilic quinones.</text>
</comment>
<comment type="function">
    <text evidence="1">Also exhibits azoreductase activity. Catalyzes the reductive cleavage of the azo bond in aromatic azo compounds to the corresponding amines.</text>
</comment>
<comment type="catalytic activity">
    <reaction evidence="1">
        <text>2 a quinone + NADH + H(+) = 2 a 1,4-benzosemiquinone + NAD(+)</text>
        <dbReference type="Rhea" id="RHEA:65952"/>
        <dbReference type="ChEBI" id="CHEBI:15378"/>
        <dbReference type="ChEBI" id="CHEBI:57540"/>
        <dbReference type="ChEBI" id="CHEBI:57945"/>
        <dbReference type="ChEBI" id="CHEBI:132124"/>
        <dbReference type="ChEBI" id="CHEBI:134225"/>
    </reaction>
</comment>
<comment type="catalytic activity">
    <reaction evidence="1">
        <text>N,N-dimethyl-1,4-phenylenediamine + anthranilate + 2 NAD(+) = 2-(4-dimethylaminophenyl)diazenylbenzoate + 2 NADH + 2 H(+)</text>
        <dbReference type="Rhea" id="RHEA:55872"/>
        <dbReference type="ChEBI" id="CHEBI:15378"/>
        <dbReference type="ChEBI" id="CHEBI:15783"/>
        <dbReference type="ChEBI" id="CHEBI:16567"/>
        <dbReference type="ChEBI" id="CHEBI:57540"/>
        <dbReference type="ChEBI" id="CHEBI:57945"/>
        <dbReference type="ChEBI" id="CHEBI:71579"/>
        <dbReference type="EC" id="1.7.1.17"/>
    </reaction>
</comment>
<comment type="cofactor">
    <cofactor evidence="1">
        <name>FMN</name>
        <dbReference type="ChEBI" id="CHEBI:58210"/>
    </cofactor>
    <text evidence="1">Binds 1 FMN per subunit.</text>
</comment>
<comment type="subunit">
    <text evidence="1">Homodimer.</text>
</comment>
<comment type="similarity">
    <text evidence="1">Belongs to the azoreductase type 1 family.</text>
</comment>
<evidence type="ECO:0000255" key="1">
    <source>
        <dbReference type="HAMAP-Rule" id="MF_01216"/>
    </source>
</evidence>
<evidence type="ECO:0007829" key="2">
    <source>
        <dbReference type="PDB" id="3U7I"/>
    </source>
</evidence>
<proteinExistence type="evidence at protein level"/>
<dbReference type="EC" id="1.6.5.-" evidence="1"/>
<dbReference type="EC" id="1.7.1.17" evidence="1"/>
<dbReference type="EMBL" id="AE016879">
    <property type="protein sequence ID" value="AAP24957.1"/>
    <property type="molecule type" value="Genomic_DNA"/>
</dbReference>
<dbReference type="EMBL" id="AE017225">
    <property type="protein sequence ID" value="AAT53234.1"/>
    <property type="molecule type" value="Genomic_DNA"/>
</dbReference>
<dbReference type="EMBL" id="AE017334">
    <property type="protein sequence ID" value="AAT30073.1"/>
    <property type="molecule type" value="Genomic_DNA"/>
</dbReference>
<dbReference type="RefSeq" id="NP_843471.1">
    <property type="nucleotide sequence ID" value="NC_003997.3"/>
</dbReference>
<dbReference type="RefSeq" id="WP_001044344.1">
    <property type="nucleotide sequence ID" value="NZ_WXXJ01000014.1"/>
</dbReference>
<dbReference type="RefSeq" id="YP_027183.1">
    <property type="nucleotide sequence ID" value="NC_005945.1"/>
</dbReference>
<dbReference type="PDB" id="3U7I">
    <property type="method" value="X-ray"/>
    <property type="resolution" value="1.75 A"/>
    <property type="chains" value="A/B/C/D=1-220"/>
</dbReference>
<dbReference type="PDB" id="4M0C">
    <property type="method" value="X-ray"/>
    <property type="resolution" value="2.07 A"/>
    <property type="chains" value="A/B=1-220"/>
</dbReference>
<dbReference type="PDBsum" id="3U7I"/>
<dbReference type="PDBsum" id="4M0C"/>
<dbReference type="SMR" id="Q81UB2"/>
<dbReference type="STRING" id="261594.GBAA_0966"/>
<dbReference type="DNASU" id="1088173"/>
<dbReference type="GeneID" id="45021014"/>
<dbReference type="KEGG" id="ban:BA_0966"/>
<dbReference type="KEGG" id="banh:HYU01_05140"/>
<dbReference type="KEGG" id="bar:GBAA_0966"/>
<dbReference type="KEGG" id="bat:BAS0908"/>
<dbReference type="PATRIC" id="fig|198094.11.peg.959"/>
<dbReference type="eggNOG" id="COG1182">
    <property type="taxonomic scope" value="Bacteria"/>
</dbReference>
<dbReference type="HOGENOM" id="CLU_088964_3_0_9"/>
<dbReference type="OMA" id="QFKAHHR"/>
<dbReference type="OrthoDB" id="9805013at2"/>
<dbReference type="EvolutionaryTrace" id="Q81UB2"/>
<dbReference type="Proteomes" id="UP000000427">
    <property type="component" value="Chromosome"/>
</dbReference>
<dbReference type="Proteomes" id="UP000000594">
    <property type="component" value="Chromosome"/>
</dbReference>
<dbReference type="GO" id="GO:0009055">
    <property type="term" value="F:electron transfer activity"/>
    <property type="evidence" value="ECO:0007669"/>
    <property type="project" value="UniProtKB-UniRule"/>
</dbReference>
<dbReference type="GO" id="GO:0010181">
    <property type="term" value="F:FMN binding"/>
    <property type="evidence" value="ECO:0007669"/>
    <property type="project" value="UniProtKB-UniRule"/>
</dbReference>
<dbReference type="GO" id="GO:0016652">
    <property type="term" value="F:oxidoreductase activity, acting on NAD(P)H as acceptor"/>
    <property type="evidence" value="ECO:0007669"/>
    <property type="project" value="UniProtKB-UniRule"/>
</dbReference>
<dbReference type="GO" id="GO:0016655">
    <property type="term" value="F:oxidoreductase activity, acting on NAD(P)H, quinone or similar compound as acceptor"/>
    <property type="evidence" value="ECO:0007669"/>
    <property type="project" value="InterPro"/>
</dbReference>
<dbReference type="Gene3D" id="3.40.50.360">
    <property type="match status" value="1"/>
</dbReference>
<dbReference type="HAMAP" id="MF_01216">
    <property type="entry name" value="Azoreductase_type1"/>
    <property type="match status" value="1"/>
</dbReference>
<dbReference type="InterPro" id="IPR003680">
    <property type="entry name" value="Flavodoxin_fold"/>
</dbReference>
<dbReference type="InterPro" id="IPR029039">
    <property type="entry name" value="Flavoprotein-like_sf"/>
</dbReference>
<dbReference type="InterPro" id="IPR050104">
    <property type="entry name" value="FMN-dep_NADH:Q_OxRdtase_AzoR1"/>
</dbReference>
<dbReference type="InterPro" id="IPR023048">
    <property type="entry name" value="NADH:quinone_OxRdtase_FMN_depd"/>
</dbReference>
<dbReference type="PANTHER" id="PTHR43741">
    <property type="entry name" value="FMN-DEPENDENT NADH-AZOREDUCTASE 1"/>
    <property type="match status" value="1"/>
</dbReference>
<dbReference type="PANTHER" id="PTHR43741:SF7">
    <property type="entry name" value="FMN-DEPENDENT NADH:QUINONE OXIDOREDUCTASE"/>
    <property type="match status" value="1"/>
</dbReference>
<dbReference type="Pfam" id="PF02525">
    <property type="entry name" value="Flavodoxin_2"/>
    <property type="match status" value="1"/>
</dbReference>
<dbReference type="SUPFAM" id="SSF52218">
    <property type="entry name" value="Flavoproteins"/>
    <property type="match status" value="1"/>
</dbReference>
<protein>
    <recommendedName>
        <fullName evidence="1">FMN-dependent NADH:quinone oxidoreductase 1</fullName>
        <ecNumber evidence="1">1.6.5.-</ecNumber>
    </recommendedName>
    <alternativeName>
        <fullName evidence="1">Azo-dye reductase 1</fullName>
    </alternativeName>
    <alternativeName>
        <fullName evidence="1">FMN-dependent NADH-azo compound oxidoreductase 1</fullName>
    </alternativeName>
    <alternativeName>
        <fullName evidence="1">FMN-dependent NADH-azoreductase 1</fullName>
        <ecNumber evidence="1">1.7.1.17</ecNumber>
    </alternativeName>
</protein>
<name>AZOR1_BACAN</name>
<sequence>MNKTLIINAHPKVDDTSSVSIKVFKHFLESYKELISNNETIEQINLYDDVVPMIDKTVLSAWEKQGNGQELTREEQKVTERMSEILQQFKSANTYVIVLPLHNFNIPSKLKDYMDNIMIARETFKYTETGSVGLLKDGRRMLVIQASGGIYTNDDWYTDVEYSHKYLKAMFNFLGIEDYQIVRAQGTAVLDPTEVLQNAYKEVEEAASRLANKYIFSLEE</sequence>
<accession>Q81UB2</accession>
<accession>Q6I2J7</accession>
<accession>Q6KWC6</accession>